<dbReference type="EMBL" id="CP001233">
    <property type="protein sequence ID" value="ACP06799.1"/>
    <property type="molecule type" value="Genomic_DNA"/>
</dbReference>
<dbReference type="RefSeq" id="WP_000062614.1">
    <property type="nucleotide sequence ID" value="NC_012578.1"/>
</dbReference>
<dbReference type="SMR" id="C3LRP4"/>
<dbReference type="GeneID" id="94012766"/>
<dbReference type="KEGG" id="vcm:VCM66_2502"/>
<dbReference type="HOGENOM" id="CLU_098428_0_0_6"/>
<dbReference type="Proteomes" id="UP000001217">
    <property type="component" value="Chromosome I"/>
</dbReference>
<dbReference type="GO" id="GO:1990904">
    <property type="term" value="C:ribonucleoprotein complex"/>
    <property type="evidence" value="ECO:0007669"/>
    <property type="project" value="UniProtKB-KW"/>
</dbReference>
<dbReference type="GO" id="GO:0005840">
    <property type="term" value="C:ribosome"/>
    <property type="evidence" value="ECO:0007669"/>
    <property type="project" value="UniProtKB-KW"/>
</dbReference>
<dbReference type="GO" id="GO:0019843">
    <property type="term" value="F:rRNA binding"/>
    <property type="evidence" value="ECO:0007669"/>
    <property type="project" value="UniProtKB-UniRule"/>
</dbReference>
<dbReference type="GO" id="GO:0003735">
    <property type="term" value="F:structural constituent of ribosome"/>
    <property type="evidence" value="ECO:0007669"/>
    <property type="project" value="InterPro"/>
</dbReference>
<dbReference type="GO" id="GO:0006412">
    <property type="term" value="P:translation"/>
    <property type="evidence" value="ECO:0007669"/>
    <property type="project" value="UniProtKB-UniRule"/>
</dbReference>
<dbReference type="FunFam" id="3.30.1370.30:FF:000003">
    <property type="entry name" value="30S ribosomal protein S8"/>
    <property type="match status" value="1"/>
</dbReference>
<dbReference type="FunFam" id="3.30.1490.10:FF:000001">
    <property type="entry name" value="30S ribosomal protein S8"/>
    <property type="match status" value="1"/>
</dbReference>
<dbReference type="Gene3D" id="3.30.1370.30">
    <property type="match status" value="1"/>
</dbReference>
<dbReference type="Gene3D" id="3.30.1490.10">
    <property type="match status" value="1"/>
</dbReference>
<dbReference type="HAMAP" id="MF_01302_B">
    <property type="entry name" value="Ribosomal_uS8_B"/>
    <property type="match status" value="1"/>
</dbReference>
<dbReference type="InterPro" id="IPR000630">
    <property type="entry name" value="Ribosomal_uS8"/>
</dbReference>
<dbReference type="InterPro" id="IPR047863">
    <property type="entry name" value="Ribosomal_uS8_CS"/>
</dbReference>
<dbReference type="InterPro" id="IPR035987">
    <property type="entry name" value="Ribosomal_uS8_sf"/>
</dbReference>
<dbReference type="NCBIfam" id="NF001109">
    <property type="entry name" value="PRK00136.1"/>
    <property type="match status" value="1"/>
</dbReference>
<dbReference type="PANTHER" id="PTHR11758">
    <property type="entry name" value="40S RIBOSOMAL PROTEIN S15A"/>
    <property type="match status" value="1"/>
</dbReference>
<dbReference type="Pfam" id="PF00410">
    <property type="entry name" value="Ribosomal_S8"/>
    <property type="match status" value="1"/>
</dbReference>
<dbReference type="SUPFAM" id="SSF56047">
    <property type="entry name" value="Ribosomal protein S8"/>
    <property type="match status" value="1"/>
</dbReference>
<dbReference type="PROSITE" id="PS00053">
    <property type="entry name" value="RIBOSOMAL_S8"/>
    <property type="match status" value="1"/>
</dbReference>
<reference key="1">
    <citation type="journal article" date="2008" name="PLoS ONE">
        <title>A recalibrated molecular clock and independent origins for the cholera pandemic clones.</title>
        <authorList>
            <person name="Feng L."/>
            <person name="Reeves P.R."/>
            <person name="Lan R."/>
            <person name="Ren Y."/>
            <person name="Gao C."/>
            <person name="Zhou Z."/>
            <person name="Ren Y."/>
            <person name="Cheng J."/>
            <person name="Wang W."/>
            <person name="Wang J."/>
            <person name="Qian W."/>
            <person name="Li D."/>
            <person name="Wang L."/>
        </authorList>
    </citation>
    <scope>NUCLEOTIDE SEQUENCE [LARGE SCALE GENOMIC DNA]</scope>
    <source>
        <strain>M66-2</strain>
    </source>
</reference>
<proteinExistence type="inferred from homology"/>
<keyword id="KW-0687">Ribonucleoprotein</keyword>
<keyword id="KW-0689">Ribosomal protein</keyword>
<keyword id="KW-0694">RNA-binding</keyword>
<keyword id="KW-0699">rRNA-binding</keyword>
<feature type="chain" id="PRO_1000165360" description="Small ribosomal subunit protein uS8">
    <location>
        <begin position="1"/>
        <end position="130"/>
    </location>
</feature>
<sequence length="130" mass="13982">MSMQDPISDMLTRIRNGQAANKVAVKMPSSKLKVAIAALLKAEGYIADFAVEGEVKAELEITLKYFQAKPVIEQIKRVSRPGLRVYKKKDELPSVMGGLGVAVVSTSKGLMSDRAARKAGLGGEIICYVA</sequence>
<name>RS8_VIBCM</name>
<gene>
    <name evidence="1" type="primary">rpsH</name>
    <name type="ordered locus">VCM66_2502</name>
</gene>
<evidence type="ECO:0000255" key="1">
    <source>
        <dbReference type="HAMAP-Rule" id="MF_01302"/>
    </source>
</evidence>
<evidence type="ECO:0000305" key="2"/>
<comment type="function">
    <text evidence="1">One of the primary rRNA binding proteins, it binds directly to 16S rRNA central domain where it helps coordinate assembly of the platform of the 30S subunit.</text>
</comment>
<comment type="subunit">
    <text evidence="1">Part of the 30S ribosomal subunit. Contacts proteins S5 and S12.</text>
</comment>
<comment type="similarity">
    <text evidence="1">Belongs to the universal ribosomal protein uS8 family.</text>
</comment>
<accession>C3LRP4</accession>
<organism>
    <name type="scientific">Vibrio cholerae serotype O1 (strain M66-2)</name>
    <dbReference type="NCBI Taxonomy" id="579112"/>
    <lineage>
        <taxon>Bacteria</taxon>
        <taxon>Pseudomonadati</taxon>
        <taxon>Pseudomonadota</taxon>
        <taxon>Gammaproteobacteria</taxon>
        <taxon>Vibrionales</taxon>
        <taxon>Vibrionaceae</taxon>
        <taxon>Vibrio</taxon>
    </lineage>
</organism>
<protein>
    <recommendedName>
        <fullName evidence="1">Small ribosomal subunit protein uS8</fullName>
    </recommendedName>
    <alternativeName>
        <fullName evidence="2">30S ribosomal protein S8</fullName>
    </alternativeName>
</protein>